<dbReference type="EC" id="6.3.5.4"/>
<dbReference type="EMBL" id="X84448">
    <property type="protein sequence ID" value="CAA59138.1"/>
    <property type="molecule type" value="mRNA"/>
</dbReference>
<dbReference type="PIR" id="S52387">
    <property type="entry name" value="S52387"/>
</dbReference>
<dbReference type="SMR" id="P49091"/>
<dbReference type="UniPathway" id="UPA00134">
    <property type="reaction ID" value="UER00195"/>
</dbReference>
<dbReference type="GO" id="GO:0005829">
    <property type="term" value="C:cytosol"/>
    <property type="evidence" value="ECO:0007669"/>
    <property type="project" value="TreeGrafter"/>
</dbReference>
<dbReference type="GO" id="GO:0004066">
    <property type="term" value="F:asparagine synthase (glutamine-hydrolyzing) activity"/>
    <property type="evidence" value="ECO:0007669"/>
    <property type="project" value="UniProtKB-EC"/>
</dbReference>
<dbReference type="GO" id="GO:0005524">
    <property type="term" value="F:ATP binding"/>
    <property type="evidence" value="ECO:0007669"/>
    <property type="project" value="UniProtKB-KW"/>
</dbReference>
<dbReference type="GO" id="GO:0070981">
    <property type="term" value="P:L-asparagine biosynthetic process"/>
    <property type="evidence" value="ECO:0007669"/>
    <property type="project" value="UniProtKB-UniPathway"/>
</dbReference>
<dbReference type="CDD" id="cd01991">
    <property type="entry name" value="Asn_synthase_B_C"/>
    <property type="match status" value="1"/>
</dbReference>
<dbReference type="CDD" id="cd00712">
    <property type="entry name" value="AsnB"/>
    <property type="match status" value="1"/>
</dbReference>
<dbReference type="FunFam" id="3.40.50.620:FF:000055">
    <property type="entry name" value="Asparagine synthetase [glutamine-hydrolyzing]"/>
    <property type="match status" value="1"/>
</dbReference>
<dbReference type="FunFam" id="3.60.20.10:FF:000024">
    <property type="entry name" value="Asparagine synthetase [glutamine-hydrolyzing]"/>
    <property type="match status" value="1"/>
</dbReference>
<dbReference type="Gene3D" id="3.60.20.10">
    <property type="entry name" value="Glutamine Phosphoribosylpyrophosphate, subunit 1, domain 1"/>
    <property type="match status" value="1"/>
</dbReference>
<dbReference type="Gene3D" id="3.40.50.620">
    <property type="entry name" value="HUPs"/>
    <property type="match status" value="1"/>
</dbReference>
<dbReference type="InterPro" id="IPR006426">
    <property type="entry name" value="Asn_synth_AEB"/>
</dbReference>
<dbReference type="InterPro" id="IPR001962">
    <property type="entry name" value="Asn_synthase"/>
</dbReference>
<dbReference type="InterPro" id="IPR050795">
    <property type="entry name" value="Asn_Synthetase"/>
</dbReference>
<dbReference type="InterPro" id="IPR033738">
    <property type="entry name" value="AsnB_N"/>
</dbReference>
<dbReference type="InterPro" id="IPR017932">
    <property type="entry name" value="GATase_2_dom"/>
</dbReference>
<dbReference type="InterPro" id="IPR029055">
    <property type="entry name" value="Ntn_hydrolases_N"/>
</dbReference>
<dbReference type="InterPro" id="IPR014729">
    <property type="entry name" value="Rossmann-like_a/b/a_fold"/>
</dbReference>
<dbReference type="NCBIfam" id="TIGR01536">
    <property type="entry name" value="asn_synth_AEB"/>
    <property type="match status" value="1"/>
</dbReference>
<dbReference type="NCBIfam" id="NF006949">
    <property type="entry name" value="PRK09431.1"/>
    <property type="match status" value="1"/>
</dbReference>
<dbReference type="PANTHER" id="PTHR11772">
    <property type="entry name" value="ASPARAGINE SYNTHETASE"/>
    <property type="match status" value="1"/>
</dbReference>
<dbReference type="PANTHER" id="PTHR11772:SF48">
    <property type="entry name" value="ASPARAGINE SYNTHETASE [GLUTAMINE-HYDROLYZING] 1"/>
    <property type="match status" value="1"/>
</dbReference>
<dbReference type="Pfam" id="PF00733">
    <property type="entry name" value="Asn_synthase"/>
    <property type="match status" value="1"/>
</dbReference>
<dbReference type="Pfam" id="PF13537">
    <property type="entry name" value="GATase_7"/>
    <property type="match status" value="1"/>
</dbReference>
<dbReference type="PIRSF" id="PIRSF001589">
    <property type="entry name" value="Asn_synthetase_glu-h"/>
    <property type="match status" value="1"/>
</dbReference>
<dbReference type="SUPFAM" id="SSF52402">
    <property type="entry name" value="Adenine nucleotide alpha hydrolases-like"/>
    <property type="match status" value="1"/>
</dbReference>
<dbReference type="SUPFAM" id="SSF56235">
    <property type="entry name" value="N-terminal nucleophile aminohydrolases (Ntn hydrolases)"/>
    <property type="match status" value="1"/>
</dbReference>
<dbReference type="PROSITE" id="PS51278">
    <property type="entry name" value="GATASE_TYPE_2"/>
    <property type="match status" value="1"/>
</dbReference>
<keyword id="KW-0028">Amino-acid biosynthesis</keyword>
<keyword id="KW-0061">Asparagine biosynthesis</keyword>
<keyword id="KW-0067">ATP-binding</keyword>
<keyword id="KW-0315">Glutamine amidotransferase</keyword>
<keyword id="KW-0436">Ligase</keyword>
<keyword id="KW-0547">Nucleotide-binding</keyword>
<evidence type="ECO:0000250" key="1"/>
<evidence type="ECO:0000255" key="2">
    <source>
        <dbReference type="PROSITE-ProRule" id="PRU00609"/>
    </source>
</evidence>
<evidence type="ECO:0000305" key="3"/>
<reference key="1">
    <citation type="online journal article" date="1995" name="Plant Gene Register">
        <title>An asparagine synthetase cDNA clone from Broccoli (Brassica oleracea L.).</title>
        <authorList>
            <person name="Downs C.G."/>
            <person name="Pogson B.J."/>
            <person name="Davies K.M."/>
            <person name="Almira E.C."/>
        </authorList>
        <locator>PGR95-016</locator>
    </citation>
    <scope>NUCLEOTIDE SEQUENCE [MRNA]</scope>
    <source>
        <strain>cv. Shogun</strain>
    </source>
</reference>
<protein>
    <recommendedName>
        <fullName>Asparagine synthetase [glutamine-hydrolyzing]</fullName>
        <ecNumber>6.3.5.4</ecNumber>
    </recommendedName>
    <alternativeName>
        <fullName>Glutamine-dependent asparagine synthetase</fullName>
    </alternativeName>
</protein>
<feature type="initiator methionine" description="Removed" evidence="1">
    <location>
        <position position="1"/>
    </location>
</feature>
<feature type="chain" id="PRO_0000056921" description="Asparagine synthetase [glutamine-hydrolyzing]">
    <location>
        <begin position="2"/>
        <end position="586"/>
    </location>
</feature>
<feature type="domain" description="Glutamine amidotransferase type-2" evidence="2">
    <location>
        <begin position="2"/>
        <end position="185"/>
    </location>
</feature>
<feature type="domain" description="Asparagine synthetase">
    <location>
        <begin position="194"/>
        <end position="517"/>
    </location>
</feature>
<feature type="active site" description="For GATase activity" evidence="1">
    <location>
        <position position="2"/>
    </location>
</feature>
<feature type="binding site" evidence="1">
    <location>
        <begin position="50"/>
        <end position="54"/>
    </location>
    <ligand>
        <name>L-glutamine</name>
        <dbReference type="ChEBI" id="CHEBI:58359"/>
    </ligand>
</feature>
<feature type="binding site" evidence="1">
    <location>
        <begin position="75"/>
        <end position="77"/>
    </location>
    <ligand>
        <name>L-glutamine</name>
        <dbReference type="ChEBI" id="CHEBI:58359"/>
    </ligand>
</feature>
<feature type="binding site" evidence="1">
    <location>
        <position position="98"/>
    </location>
    <ligand>
        <name>L-glutamine</name>
        <dbReference type="ChEBI" id="CHEBI:58359"/>
    </ligand>
</feature>
<feature type="binding site" evidence="1">
    <location>
        <position position="232"/>
    </location>
    <ligand>
        <name>ATP</name>
        <dbReference type="ChEBI" id="CHEBI:30616"/>
    </ligand>
</feature>
<feature type="binding site" evidence="1">
    <location>
        <position position="268"/>
    </location>
    <ligand>
        <name>ATP</name>
        <dbReference type="ChEBI" id="CHEBI:30616"/>
    </ligand>
</feature>
<feature type="binding site" evidence="1">
    <location>
        <begin position="342"/>
        <end position="343"/>
    </location>
    <ligand>
        <name>ATP</name>
        <dbReference type="ChEBI" id="CHEBI:30616"/>
    </ligand>
</feature>
<feature type="site" description="Important for beta-aspartyl-AMP intermediate formation" evidence="1">
    <location>
        <position position="344"/>
    </location>
</feature>
<name>ASNS_BRAOL</name>
<proteinExistence type="evidence at transcript level"/>
<organism>
    <name type="scientific">Brassica oleracea</name>
    <name type="common">Wild cabbage</name>
    <dbReference type="NCBI Taxonomy" id="3712"/>
    <lineage>
        <taxon>Eukaryota</taxon>
        <taxon>Viridiplantae</taxon>
        <taxon>Streptophyta</taxon>
        <taxon>Embryophyta</taxon>
        <taxon>Tracheophyta</taxon>
        <taxon>Spermatophyta</taxon>
        <taxon>Magnoliopsida</taxon>
        <taxon>eudicotyledons</taxon>
        <taxon>Gunneridae</taxon>
        <taxon>Pentapetalae</taxon>
        <taxon>rosids</taxon>
        <taxon>malvids</taxon>
        <taxon>Brassicales</taxon>
        <taxon>Brassicaceae</taxon>
        <taxon>Brassiceae</taxon>
        <taxon>Brassica</taxon>
    </lineage>
</organism>
<accession>P49091</accession>
<sequence>MCGILAVLGCSDDSQAKRVRVLELSRRLRHRGPDWSGIYQNGFNYLAHQRLAIIDPDSGDQPLFNEDKSIVVTVNGEIYNHEELRKGLKNHKFHTGSDCDVIAHLYEEHGENFVDMLDGIFSFVLLDTRDNSFMVARDAVGVTSLYIGWGLDGSLWVSSEMKGLHEDCEHFEAFPPGHLYSSKSGGGFKQWYNPPWFNESVPSTPYEPLAIRSAFEDAVIKRLMTDVPFGVLLSGGLDSSLVASITARHLAGTKAAKRWGPQLHSFCVGLEGSPDLKAGKEVAEYLGTVHHEFHFTVQDGIDAIEDVIYHVETYDVTTIRASTPMFLMSRKIKSLGVKMVLSGEGSDEIFGGYLYFHKAPNKQEFHQETCRKIKALHKYDCLRANKATSAFGLEARVPFLDKEFINTAMSLDPESKMIKPEEGRIEKWVLRRAFDDEERPYLPKHILYRQKEQFSDGVGYSWIDGLKAHAAENVNDKMMSKAAFIFPHNTPLTKEAYYYRMIFERFFPQNSARLTVPGGATVACSTAKAVEWDASWSNNMDPSGRAAIGVHLSAYDGSKVALPLPAPHKAIDDIPMMMGQEVVIQT</sequence>
<comment type="catalytic activity">
    <reaction>
        <text>L-aspartate + L-glutamine + ATP + H2O = L-asparagine + L-glutamate + AMP + diphosphate + H(+)</text>
        <dbReference type="Rhea" id="RHEA:12228"/>
        <dbReference type="ChEBI" id="CHEBI:15377"/>
        <dbReference type="ChEBI" id="CHEBI:15378"/>
        <dbReference type="ChEBI" id="CHEBI:29985"/>
        <dbReference type="ChEBI" id="CHEBI:29991"/>
        <dbReference type="ChEBI" id="CHEBI:30616"/>
        <dbReference type="ChEBI" id="CHEBI:33019"/>
        <dbReference type="ChEBI" id="CHEBI:58048"/>
        <dbReference type="ChEBI" id="CHEBI:58359"/>
        <dbReference type="ChEBI" id="CHEBI:456215"/>
        <dbReference type="EC" id="6.3.5.4"/>
    </reaction>
</comment>
<comment type="pathway">
    <text>Amino-acid biosynthesis; L-asparagine biosynthesis; L-asparagine from L-aspartate (L-Gln route): step 1/1.</text>
</comment>
<comment type="similarity">
    <text evidence="3">Belongs to the asparagine synthetase family.</text>
</comment>